<name>RL10A_CANAL</name>
<reference key="1">
    <citation type="submission" date="1998-09" db="EMBL/GenBank/DDBJ databases">
        <title>The Candida albicans gene SSM1b encodes a ribosomal protein.</title>
        <authorList>
            <person name="Pallotti C."/>
            <person name="Montero M."/>
            <person name="Gomez-Lobo M."/>
            <person name="Magee B.B."/>
            <person name="Valentin E."/>
            <person name="Sentandreu R."/>
            <person name="Marcilla A."/>
        </authorList>
    </citation>
    <scope>NUCLEOTIDE SEQUENCE [GENOMIC DNA]</scope>
    <source>
        <strain>SC5314 / ATCC MYA-2876</strain>
    </source>
</reference>
<reference key="2">
    <citation type="journal article" date="2004" name="Proc. Natl. Acad. Sci. U.S.A.">
        <title>The diploid genome sequence of Candida albicans.</title>
        <authorList>
            <person name="Jones T."/>
            <person name="Federspiel N.A."/>
            <person name="Chibana H."/>
            <person name="Dungan J."/>
            <person name="Kalman S."/>
            <person name="Magee B.B."/>
            <person name="Newport G."/>
            <person name="Thorstenson Y.R."/>
            <person name="Agabian N."/>
            <person name="Magee P.T."/>
            <person name="Davis R.W."/>
            <person name="Scherer S."/>
        </authorList>
    </citation>
    <scope>NUCLEOTIDE SEQUENCE [LARGE SCALE GENOMIC DNA]</scope>
    <source>
        <strain>SC5314 / ATCC MYA-2876</strain>
    </source>
</reference>
<reference key="3">
    <citation type="journal article" date="2007" name="Genome Biol.">
        <title>Assembly of the Candida albicans genome into sixteen supercontigs aligned on the eight chromosomes.</title>
        <authorList>
            <person name="van het Hoog M."/>
            <person name="Rast T.J."/>
            <person name="Martchenko M."/>
            <person name="Grindle S."/>
            <person name="Dignard D."/>
            <person name="Hogues H."/>
            <person name="Cuomo C."/>
            <person name="Berriman M."/>
            <person name="Scherer S."/>
            <person name="Magee B.B."/>
            <person name="Whiteway M."/>
            <person name="Chibana H."/>
            <person name="Nantel A."/>
            <person name="Magee P.T."/>
        </authorList>
    </citation>
    <scope>GENOME REANNOTATION</scope>
    <source>
        <strain>SC5314 / ATCC MYA-2876</strain>
    </source>
</reference>
<reference key="4">
    <citation type="journal article" date="2013" name="Genome Biol.">
        <title>Assembly of a phased diploid Candida albicans genome facilitates allele-specific measurements and provides a simple model for repeat and indel structure.</title>
        <authorList>
            <person name="Muzzey D."/>
            <person name="Schwartz K."/>
            <person name="Weissman J.S."/>
            <person name="Sherlock G."/>
        </authorList>
    </citation>
    <scope>NUCLEOTIDE SEQUENCE [LARGE SCALE GENOMIC DNA]</scope>
    <scope>GENOME REANNOTATION</scope>
    <source>
        <strain>SC5314 / ATCC MYA-2876</strain>
    </source>
</reference>
<proteinExistence type="evidence at protein level"/>
<evidence type="ECO:0000250" key="1">
    <source>
        <dbReference type="UniProtKB" id="P0CX43"/>
    </source>
</evidence>
<evidence type="ECO:0000305" key="2"/>
<dbReference type="EMBL" id="AJ011417">
    <property type="protein sequence ID" value="CAB56219.1"/>
    <property type="molecule type" value="Genomic_DNA"/>
</dbReference>
<dbReference type="EMBL" id="CP017628">
    <property type="protein sequence ID" value="AOW30159.1"/>
    <property type="molecule type" value="Genomic_DNA"/>
</dbReference>
<dbReference type="RefSeq" id="XP_712505.1">
    <property type="nucleotide sequence ID" value="XM_707412.1"/>
</dbReference>
<dbReference type="PDB" id="8C3A">
    <property type="method" value="X-ray"/>
    <property type="resolution" value="3.00 A"/>
    <property type="chains" value="L1/l1=1-217"/>
</dbReference>
<dbReference type="PDB" id="8OH6">
    <property type="method" value="X-ray"/>
    <property type="resolution" value="3.35 A"/>
    <property type="chains" value="l1=1-217"/>
</dbReference>
<dbReference type="PDBsum" id="8C3A"/>
<dbReference type="PDBsum" id="8OH6"/>
<dbReference type="SMR" id="Q9UVJ4"/>
<dbReference type="BioGRID" id="1228936">
    <property type="interactions" value="1"/>
</dbReference>
<dbReference type="FunCoup" id="Q9UVJ4">
    <property type="interactions" value="1127"/>
</dbReference>
<dbReference type="STRING" id="237561.Q9UVJ4"/>
<dbReference type="EnsemblFungi" id="C6_02240C_A-T">
    <property type="protein sequence ID" value="C6_02240C_A-T-p1"/>
    <property type="gene ID" value="C6_02240C_A"/>
</dbReference>
<dbReference type="GeneID" id="3645868"/>
<dbReference type="KEGG" id="cal:CAALFM_C602240CA"/>
<dbReference type="CGD" id="CAL0000174170">
    <property type="gene designation" value="RPL10A"/>
</dbReference>
<dbReference type="VEuPathDB" id="FungiDB:C6_02240C_A"/>
<dbReference type="eggNOG" id="KOG1570">
    <property type="taxonomic scope" value="Eukaryota"/>
</dbReference>
<dbReference type="HOGENOM" id="CLU_062853_3_0_1"/>
<dbReference type="InParanoid" id="Q9UVJ4"/>
<dbReference type="OMA" id="GPRNKMP"/>
<dbReference type="OrthoDB" id="2449818at2759"/>
<dbReference type="PRO" id="PR:Q9UVJ4"/>
<dbReference type="Proteomes" id="UP000000559">
    <property type="component" value="Chromosome 6"/>
</dbReference>
<dbReference type="GO" id="GO:0022625">
    <property type="term" value="C:cytosolic large ribosomal subunit"/>
    <property type="evidence" value="ECO:0000318"/>
    <property type="project" value="GO_Central"/>
</dbReference>
<dbReference type="GO" id="GO:0003723">
    <property type="term" value="F:RNA binding"/>
    <property type="evidence" value="ECO:0000318"/>
    <property type="project" value="GO_Central"/>
</dbReference>
<dbReference type="GO" id="GO:0003735">
    <property type="term" value="F:structural constituent of ribosome"/>
    <property type="evidence" value="ECO:0007669"/>
    <property type="project" value="InterPro"/>
</dbReference>
<dbReference type="GO" id="GO:0006412">
    <property type="term" value="P:translation"/>
    <property type="evidence" value="ECO:0007669"/>
    <property type="project" value="InterPro"/>
</dbReference>
<dbReference type="CDD" id="cd00403">
    <property type="entry name" value="Ribosomal_L1"/>
    <property type="match status" value="1"/>
</dbReference>
<dbReference type="FunFam" id="3.30.190.20:FF:000006">
    <property type="entry name" value="Ribosomal protein"/>
    <property type="match status" value="1"/>
</dbReference>
<dbReference type="FunFam" id="3.40.50.790:FF:000002">
    <property type="entry name" value="Ribosomal protein"/>
    <property type="match status" value="1"/>
</dbReference>
<dbReference type="FunFam" id="3.30.190.20:FF:000009">
    <property type="entry name" value="Ribosomal protein L10a"/>
    <property type="match status" value="1"/>
</dbReference>
<dbReference type="Gene3D" id="3.30.190.20">
    <property type="match status" value="1"/>
</dbReference>
<dbReference type="Gene3D" id="3.40.50.790">
    <property type="match status" value="1"/>
</dbReference>
<dbReference type="InterPro" id="IPR050257">
    <property type="entry name" value="eL8/uL1-like"/>
</dbReference>
<dbReference type="InterPro" id="IPR002143">
    <property type="entry name" value="Ribosomal_uL1"/>
</dbReference>
<dbReference type="InterPro" id="IPR023674">
    <property type="entry name" value="Ribosomal_uL1-like"/>
</dbReference>
<dbReference type="InterPro" id="IPR028364">
    <property type="entry name" value="Ribosomal_uL1/biogenesis"/>
</dbReference>
<dbReference type="InterPro" id="IPR016095">
    <property type="entry name" value="Ribosomal_uL1_3-a/b-sand"/>
</dbReference>
<dbReference type="InterPro" id="IPR023673">
    <property type="entry name" value="Ribosomal_uL1_CS"/>
</dbReference>
<dbReference type="PANTHER" id="PTHR23105">
    <property type="entry name" value="RIBOSOMAL PROTEIN L7AE FAMILY MEMBER"/>
    <property type="match status" value="1"/>
</dbReference>
<dbReference type="Pfam" id="PF00687">
    <property type="entry name" value="Ribosomal_L1"/>
    <property type="match status" value="1"/>
</dbReference>
<dbReference type="PIRSF" id="PIRSF002155">
    <property type="entry name" value="Ribosomal_L1"/>
    <property type="match status" value="1"/>
</dbReference>
<dbReference type="SUPFAM" id="SSF56808">
    <property type="entry name" value="Ribosomal protein L1"/>
    <property type="match status" value="1"/>
</dbReference>
<dbReference type="PROSITE" id="PS01199">
    <property type="entry name" value="RIBOSOMAL_L1"/>
    <property type="match status" value="1"/>
</dbReference>
<organism>
    <name type="scientific">Candida albicans (strain SC5314 / ATCC MYA-2876)</name>
    <name type="common">Yeast</name>
    <dbReference type="NCBI Taxonomy" id="237561"/>
    <lineage>
        <taxon>Eukaryota</taxon>
        <taxon>Fungi</taxon>
        <taxon>Dikarya</taxon>
        <taxon>Ascomycota</taxon>
        <taxon>Saccharomycotina</taxon>
        <taxon>Pichiomycetes</taxon>
        <taxon>Debaryomycetaceae</taxon>
        <taxon>Candida/Lodderomyces clade</taxon>
        <taxon>Candida</taxon>
    </lineage>
</organism>
<comment type="function">
    <text evidence="1">Component of the ribosome, a large ribonucleoprotein complex responsible for the synthesis of proteins in the cell. The small ribosomal subunit (SSU) binds messenger RNAs (mRNAs) and translates the encoded message by selecting cognate aminoacyl-transfer RNA (tRNA) molecules. The large subunit (LSU) contains the ribosomal catalytic site termed the peptidyl transferase center (PTC), which catalyzes the formation of peptide bonds, thereby polymerizing the amino acids delivered by tRNAs into a polypeptide chain. The nascent polypeptides leave the ribosome through a tunnel in the LSU and interact with protein factors that function in enzymatic processing, targeting, and the membrane insertion of nascent chains at the exit of the ribosomal tunnel. uL1 forms part of the L1 stalk, a mobile element that plays a role in evacuating the exit-site tRNA.</text>
</comment>
<comment type="subunit">
    <text evidence="1 2">Component of the large ribosomal subunit (LSU) (By similarity). Mature ribosomes consist of a small (40S) and a large (60S) subunit. The 40S subunit contains about 32 different proteins and 1 molecule of RNA (18S). The 60S subunit contains 45 different proteins and 3 molecules of RNA (25S, 5.8S and 5S) (Probable). uL1 forms part of the L1 stalk (By similarity).</text>
</comment>
<comment type="subcellular location">
    <subcellularLocation>
        <location evidence="1">Cytoplasm</location>
    </subcellularLocation>
</comment>
<comment type="similarity">
    <text evidence="2">Belongs to the universal ribosomal protein uL1 family.</text>
</comment>
<accession>Q9UVJ4</accession>
<accession>A0A1D8PPU0</accession>
<accession>Q59S75</accession>
<sequence length="217" mass="24379">MSKITSSGVRENVHKLLEYSTETKKRNFLETVELQVGLKNYDPQRDKRFSGTLKLPQVPRPNMTICIFGDAFDVDRAKSLGVDAMSVDDLKKLNKNKKLIKKLAKKYNAFIASEVLIKQIPRLLGPTLSKAGKFPTPVSHNDDLYSKVTDVKSTIKFQLKKVLCLAVAVGNVDMEEDVLVNQIMMAANFLVSLLKKNWQNVGSLVIKSTMGPSFRIY</sequence>
<protein>
    <recommendedName>
        <fullName evidence="1">Large ribosomal subunit protein uL1</fullName>
    </recommendedName>
    <alternativeName>
        <fullName>60S ribosomal protein L10a</fullName>
    </alternativeName>
</protein>
<feature type="chain" id="PRO_0000125837" description="Large ribosomal subunit protein uL1">
    <location>
        <begin position="1"/>
        <end position="217"/>
    </location>
</feature>
<feature type="sequence conflict" description="In Ref. 1; CAB56219." evidence="2" ref="1">
    <original>N</original>
    <variation>Y</variation>
    <location>
        <position position="12"/>
    </location>
</feature>
<feature type="sequence conflict" description="In Ref. 1; CAB56219." evidence="2" ref="1">
    <original>I</original>
    <variation>T</variation>
    <location>
        <position position="65"/>
    </location>
</feature>
<feature type="sequence conflict" description="In Ref. 1; CAB56219." evidence="2" ref="1">
    <original>V</original>
    <variation>F</variation>
    <location>
        <position position="74"/>
    </location>
</feature>
<feature type="sequence conflict" description="In Ref. 1; CAB56219." evidence="2" ref="1">
    <original>P</original>
    <variation>R</variation>
    <location>
        <position position="126"/>
    </location>
</feature>
<feature type="sequence conflict" description="In Ref. 1; CAB56219." evidence="2" ref="1">
    <original>K</original>
    <variation>Q</variation>
    <location>
        <position position="133"/>
    </location>
</feature>
<gene>
    <name type="primary">RPL10A</name>
    <name type="synonym">RPL1</name>
    <name type="ordered locus">CAALFM_C602240CA</name>
    <name type="ORF">CaO19.10969</name>
    <name type="ORF">CaO19.3465</name>
</gene>
<keyword id="KW-0002">3D-structure</keyword>
<keyword id="KW-0963">Cytoplasm</keyword>
<keyword id="KW-1185">Reference proteome</keyword>
<keyword id="KW-0687">Ribonucleoprotein</keyword>
<keyword id="KW-0689">Ribosomal protein</keyword>